<sequence length="316" mass="36023">MTKEFHHVTVLLHETIDMLDVKPDGIYVDATLGGAGHSEYLLSKLSEKGHLYAFDQDQNAIDNAQKRLAPYIEKGMVTFIKDNFRHLQARLREAGVQEIDGICYDLGVSSPQLDQRERGFSYKKDAPLDMRMNQDASLTAYEVVNHYDYHDLVRIFFKYGEDKFSKQIARKIEQAREVKPIETTTELAEIIKLVKPAKELKKKGHPAKQIFQAIRIEVNDELGAADESIQQAMDMLALDGRISVITFHSLEDRLTKQLFKEASTVEVPKGLPFIPDDLKPKMELVSRKPILPSAEELEANNRSHSAKLRVARKIHK</sequence>
<keyword id="KW-0963">Cytoplasm</keyword>
<keyword id="KW-0489">Methyltransferase</keyword>
<keyword id="KW-0698">rRNA processing</keyword>
<keyword id="KW-0949">S-adenosyl-L-methionine</keyword>
<keyword id="KW-0808">Transferase</keyword>
<dbReference type="EC" id="2.1.1.199" evidence="1"/>
<dbReference type="EMBL" id="CP000920">
    <property type="protein sequence ID" value="ACO20723.1"/>
    <property type="molecule type" value="Genomic_DNA"/>
</dbReference>
<dbReference type="RefSeq" id="WP_000159396.1">
    <property type="nucleotide sequence ID" value="NC_012467.1"/>
</dbReference>
<dbReference type="SMR" id="C1CIJ8"/>
<dbReference type="KEGG" id="spp:SPP_0368"/>
<dbReference type="HOGENOM" id="CLU_038422_2_0_9"/>
<dbReference type="GO" id="GO:0005737">
    <property type="term" value="C:cytoplasm"/>
    <property type="evidence" value="ECO:0007669"/>
    <property type="project" value="UniProtKB-SubCell"/>
</dbReference>
<dbReference type="GO" id="GO:0071424">
    <property type="term" value="F:rRNA (cytosine-N4-)-methyltransferase activity"/>
    <property type="evidence" value="ECO:0007669"/>
    <property type="project" value="UniProtKB-UniRule"/>
</dbReference>
<dbReference type="GO" id="GO:0070475">
    <property type="term" value="P:rRNA base methylation"/>
    <property type="evidence" value="ECO:0007669"/>
    <property type="project" value="UniProtKB-UniRule"/>
</dbReference>
<dbReference type="FunFam" id="1.10.150.170:FF:000001">
    <property type="entry name" value="Ribosomal RNA small subunit methyltransferase H"/>
    <property type="match status" value="1"/>
</dbReference>
<dbReference type="Gene3D" id="1.10.150.170">
    <property type="entry name" value="Putative methyltransferase TM0872, insert domain"/>
    <property type="match status" value="1"/>
</dbReference>
<dbReference type="Gene3D" id="3.40.50.150">
    <property type="entry name" value="Vaccinia Virus protein VP39"/>
    <property type="match status" value="1"/>
</dbReference>
<dbReference type="HAMAP" id="MF_01007">
    <property type="entry name" value="16SrRNA_methyltr_H"/>
    <property type="match status" value="1"/>
</dbReference>
<dbReference type="InterPro" id="IPR002903">
    <property type="entry name" value="RsmH"/>
</dbReference>
<dbReference type="InterPro" id="IPR023397">
    <property type="entry name" value="SAM-dep_MeTrfase_MraW_recog"/>
</dbReference>
<dbReference type="InterPro" id="IPR029063">
    <property type="entry name" value="SAM-dependent_MTases_sf"/>
</dbReference>
<dbReference type="NCBIfam" id="TIGR00006">
    <property type="entry name" value="16S rRNA (cytosine(1402)-N(4))-methyltransferase RsmH"/>
    <property type="match status" value="1"/>
</dbReference>
<dbReference type="PANTHER" id="PTHR11265:SF0">
    <property type="entry name" value="12S RRNA N4-METHYLCYTIDINE METHYLTRANSFERASE"/>
    <property type="match status" value="1"/>
</dbReference>
<dbReference type="PANTHER" id="PTHR11265">
    <property type="entry name" value="S-ADENOSYL-METHYLTRANSFERASE MRAW"/>
    <property type="match status" value="1"/>
</dbReference>
<dbReference type="Pfam" id="PF01795">
    <property type="entry name" value="Methyltransf_5"/>
    <property type="match status" value="1"/>
</dbReference>
<dbReference type="PIRSF" id="PIRSF004486">
    <property type="entry name" value="MraW"/>
    <property type="match status" value="1"/>
</dbReference>
<dbReference type="SUPFAM" id="SSF81799">
    <property type="entry name" value="Putative methyltransferase TM0872, insert domain"/>
    <property type="match status" value="1"/>
</dbReference>
<dbReference type="SUPFAM" id="SSF53335">
    <property type="entry name" value="S-adenosyl-L-methionine-dependent methyltransferases"/>
    <property type="match status" value="1"/>
</dbReference>
<feature type="chain" id="PRO_0000387154" description="Ribosomal RNA small subunit methyltransferase H">
    <location>
        <begin position="1"/>
        <end position="316"/>
    </location>
</feature>
<feature type="binding site" evidence="1">
    <location>
        <begin position="35"/>
        <end position="37"/>
    </location>
    <ligand>
        <name>S-adenosyl-L-methionine</name>
        <dbReference type="ChEBI" id="CHEBI:59789"/>
    </ligand>
</feature>
<feature type="binding site" evidence="1">
    <location>
        <position position="55"/>
    </location>
    <ligand>
        <name>S-adenosyl-L-methionine</name>
        <dbReference type="ChEBI" id="CHEBI:59789"/>
    </ligand>
</feature>
<feature type="binding site" evidence="1">
    <location>
        <position position="84"/>
    </location>
    <ligand>
        <name>S-adenosyl-L-methionine</name>
        <dbReference type="ChEBI" id="CHEBI:59789"/>
    </ligand>
</feature>
<feature type="binding site" evidence="1">
    <location>
        <position position="105"/>
    </location>
    <ligand>
        <name>S-adenosyl-L-methionine</name>
        <dbReference type="ChEBI" id="CHEBI:59789"/>
    </ligand>
</feature>
<feature type="binding site" evidence="1">
    <location>
        <position position="112"/>
    </location>
    <ligand>
        <name>S-adenosyl-L-methionine</name>
        <dbReference type="ChEBI" id="CHEBI:59789"/>
    </ligand>
</feature>
<organism>
    <name type="scientific">Streptococcus pneumoniae (strain P1031)</name>
    <dbReference type="NCBI Taxonomy" id="488223"/>
    <lineage>
        <taxon>Bacteria</taxon>
        <taxon>Bacillati</taxon>
        <taxon>Bacillota</taxon>
        <taxon>Bacilli</taxon>
        <taxon>Lactobacillales</taxon>
        <taxon>Streptococcaceae</taxon>
        <taxon>Streptococcus</taxon>
    </lineage>
</organism>
<evidence type="ECO:0000255" key="1">
    <source>
        <dbReference type="HAMAP-Rule" id="MF_01007"/>
    </source>
</evidence>
<proteinExistence type="inferred from homology"/>
<gene>
    <name evidence="1" type="primary">rsmH</name>
    <name type="synonym">mraW</name>
    <name type="ordered locus">SPP_0368</name>
</gene>
<protein>
    <recommendedName>
        <fullName evidence="1">Ribosomal RNA small subunit methyltransferase H</fullName>
        <ecNumber evidence="1">2.1.1.199</ecNumber>
    </recommendedName>
    <alternativeName>
        <fullName evidence="1">16S rRNA m(4)C1402 methyltransferase</fullName>
    </alternativeName>
    <alternativeName>
        <fullName evidence="1">rRNA (cytosine-N(4)-)-methyltransferase RsmH</fullName>
    </alternativeName>
</protein>
<accession>C1CIJ8</accession>
<name>RSMH_STRZP</name>
<comment type="function">
    <text evidence="1">Specifically methylates the N4 position of cytidine in position 1402 (C1402) of 16S rRNA.</text>
</comment>
<comment type="catalytic activity">
    <reaction evidence="1">
        <text>cytidine(1402) in 16S rRNA + S-adenosyl-L-methionine = N(4)-methylcytidine(1402) in 16S rRNA + S-adenosyl-L-homocysteine + H(+)</text>
        <dbReference type="Rhea" id="RHEA:42928"/>
        <dbReference type="Rhea" id="RHEA-COMP:10286"/>
        <dbReference type="Rhea" id="RHEA-COMP:10287"/>
        <dbReference type="ChEBI" id="CHEBI:15378"/>
        <dbReference type="ChEBI" id="CHEBI:57856"/>
        <dbReference type="ChEBI" id="CHEBI:59789"/>
        <dbReference type="ChEBI" id="CHEBI:74506"/>
        <dbReference type="ChEBI" id="CHEBI:82748"/>
        <dbReference type="EC" id="2.1.1.199"/>
    </reaction>
</comment>
<comment type="subcellular location">
    <subcellularLocation>
        <location evidence="1">Cytoplasm</location>
    </subcellularLocation>
</comment>
<comment type="similarity">
    <text evidence="1">Belongs to the methyltransferase superfamily. RsmH family.</text>
</comment>
<reference key="1">
    <citation type="journal article" date="2010" name="Genome Biol.">
        <title>Structure and dynamics of the pan-genome of Streptococcus pneumoniae and closely related species.</title>
        <authorList>
            <person name="Donati C."/>
            <person name="Hiller N.L."/>
            <person name="Tettelin H."/>
            <person name="Muzzi A."/>
            <person name="Croucher N.J."/>
            <person name="Angiuoli S.V."/>
            <person name="Oggioni M."/>
            <person name="Dunning Hotopp J.C."/>
            <person name="Hu F.Z."/>
            <person name="Riley D.R."/>
            <person name="Covacci A."/>
            <person name="Mitchell T.J."/>
            <person name="Bentley S.D."/>
            <person name="Kilian M."/>
            <person name="Ehrlich G.D."/>
            <person name="Rappuoli R."/>
            <person name="Moxon E.R."/>
            <person name="Masignani V."/>
        </authorList>
    </citation>
    <scope>NUCLEOTIDE SEQUENCE [LARGE SCALE GENOMIC DNA]</scope>
    <source>
        <strain>P1031</strain>
    </source>
</reference>